<sequence>MSLPSLDSVPMLRRGFRFQFEPAQDCHVLLYPEGMVKLNDSAGEILKLVDGRRDVAAIVAALRERFPEVPGIDEDILAFLEVAHAQFWIELQ</sequence>
<accession>Q02LD5</accession>
<evidence type="ECO:0000255" key="1">
    <source>
        <dbReference type="HAMAP-Rule" id="MF_00655"/>
    </source>
</evidence>
<name>PQQD_PSEAB</name>
<protein>
    <recommendedName>
        <fullName evidence="1">PqqA binding protein</fullName>
    </recommendedName>
    <alternativeName>
        <fullName evidence="1">Coenzyme PQQ synthesis protein D</fullName>
    </alternativeName>
    <alternativeName>
        <fullName evidence="1">Pyrroloquinoline quinone biosynthesis protein D</fullName>
    </alternativeName>
</protein>
<reference key="1">
    <citation type="journal article" date="2006" name="Genome Biol.">
        <title>Genomic analysis reveals that Pseudomonas aeruginosa virulence is combinatorial.</title>
        <authorList>
            <person name="Lee D.G."/>
            <person name="Urbach J.M."/>
            <person name="Wu G."/>
            <person name="Liberati N.T."/>
            <person name="Feinbaum R.L."/>
            <person name="Miyata S."/>
            <person name="Diggins L.T."/>
            <person name="He J."/>
            <person name="Saucier M."/>
            <person name="Deziel E."/>
            <person name="Friedman L."/>
            <person name="Li L."/>
            <person name="Grills G."/>
            <person name="Montgomery K."/>
            <person name="Kucherlapati R."/>
            <person name="Rahme L.G."/>
            <person name="Ausubel F.M."/>
        </authorList>
    </citation>
    <scope>NUCLEOTIDE SEQUENCE [LARGE SCALE GENOMIC DNA]</scope>
    <source>
        <strain>UCBPP-PA14</strain>
    </source>
</reference>
<dbReference type="EMBL" id="CP000438">
    <property type="protein sequence ID" value="ABJ11175.1"/>
    <property type="molecule type" value="Genomic_DNA"/>
</dbReference>
<dbReference type="RefSeq" id="WP_003088542.1">
    <property type="nucleotide sequence ID" value="NZ_CP034244.1"/>
</dbReference>
<dbReference type="SMR" id="Q02LD5"/>
<dbReference type="KEGG" id="pau:PA14_38790"/>
<dbReference type="PseudoCAP" id="PA14_38790"/>
<dbReference type="HOGENOM" id="CLU_163864_2_1_6"/>
<dbReference type="BioCyc" id="PAER208963:G1G74-3260-MONOMER"/>
<dbReference type="UniPathway" id="UPA00539"/>
<dbReference type="Proteomes" id="UP000000653">
    <property type="component" value="Chromosome"/>
</dbReference>
<dbReference type="GO" id="GO:0048038">
    <property type="term" value="F:quinone binding"/>
    <property type="evidence" value="ECO:0007669"/>
    <property type="project" value="InterPro"/>
</dbReference>
<dbReference type="GO" id="GO:0018189">
    <property type="term" value="P:pyrroloquinoline quinone biosynthetic process"/>
    <property type="evidence" value="ECO:0007669"/>
    <property type="project" value="UniProtKB-UniRule"/>
</dbReference>
<dbReference type="Gene3D" id="1.10.10.1150">
    <property type="entry name" value="Coenzyme PQQ synthesis protein D (PqqD)"/>
    <property type="match status" value="1"/>
</dbReference>
<dbReference type="HAMAP" id="MF_00655">
    <property type="entry name" value="PQQ_syn_PqqD"/>
    <property type="match status" value="1"/>
</dbReference>
<dbReference type="InterPro" id="IPR008792">
    <property type="entry name" value="PQQD"/>
</dbReference>
<dbReference type="InterPro" id="IPR022479">
    <property type="entry name" value="PqqD_bac"/>
</dbReference>
<dbReference type="InterPro" id="IPR041881">
    <property type="entry name" value="PqqD_sf"/>
</dbReference>
<dbReference type="NCBIfam" id="TIGR03859">
    <property type="entry name" value="PQQ_PqqD"/>
    <property type="match status" value="1"/>
</dbReference>
<dbReference type="NCBIfam" id="NF002535">
    <property type="entry name" value="PRK02079.1"/>
    <property type="match status" value="1"/>
</dbReference>
<dbReference type="Pfam" id="PF05402">
    <property type="entry name" value="PqqD"/>
    <property type="match status" value="1"/>
</dbReference>
<proteinExistence type="inferred from homology"/>
<comment type="function">
    <text evidence="1">Functions as a PqqA binding protein and presents PqqA to PqqE, in the pyrroloquinoline quinone (PQQ) biosynthetic pathway.</text>
</comment>
<comment type="pathway">
    <text evidence="1">Cofactor biosynthesis; pyrroloquinoline quinone biosynthesis.</text>
</comment>
<comment type="subunit">
    <text evidence="1">Monomer. Interacts with PqqE.</text>
</comment>
<comment type="similarity">
    <text evidence="1">Belongs to the PqqD family.</text>
</comment>
<keyword id="KW-0884">PQQ biosynthesis</keyword>
<gene>
    <name evidence="1" type="primary">pqqD</name>
    <name type="ordered locus">PA14_38790</name>
</gene>
<feature type="chain" id="PRO_1000061685" description="PqqA binding protein">
    <location>
        <begin position="1"/>
        <end position="92"/>
    </location>
</feature>
<organism>
    <name type="scientific">Pseudomonas aeruginosa (strain UCBPP-PA14)</name>
    <dbReference type="NCBI Taxonomy" id="208963"/>
    <lineage>
        <taxon>Bacteria</taxon>
        <taxon>Pseudomonadati</taxon>
        <taxon>Pseudomonadota</taxon>
        <taxon>Gammaproteobacteria</taxon>
        <taxon>Pseudomonadales</taxon>
        <taxon>Pseudomonadaceae</taxon>
        <taxon>Pseudomonas</taxon>
    </lineage>
</organism>